<reference key="1">
    <citation type="journal article" date="2004" name="Proc. Natl. Acad. Sci. U.S.A.">
        <title>Identification of anthrax toxin genes in a Bacillus cereus associated with an illness resembling inhalation anthrax.</title>
        <authorList>
            <person name="Hoffmaster A.R."/>
            <person name="Ravel J."/>
            <person name="Rasko D.A."/>
            <person name="Chapman G.D."/>
            <person name="Chute M.D."/>
            <person name="Marston C.K."/>
            <person name="De B.K."/>
            <person name="Sacchi C.T."/>
            <person name="Fitzgerald C."/>
            <person name="Mayer L.W."/>
            <person name="Maiden M.C.J."/>
            <person name="Priest F.G."/>
            <person name="Barker M."/>
            <person name="Jiang L."/>
            <person name="Cer R.Z."/>
            <person name="Rilstone J."/>
            <person name="Peterson S.N."/>
            <person name="Weyant R.S."/>
            <person name="Galloway D.R."/>
            <person name="Read T.D."/>
            <person name="Popovic T."/>
            <person name="Fraser C.M."/>
        </authorList>
    </citation>
    <scope>NUCLEOTIDE SEQUENCE [GENOMIC DNA]</scope>
    <source>
        <strain>G9241</strain>
    </source>
</reference>
<reference key="2">
    <citation type="journal article" date="2001" name="J. Appl. Microbiol.">
        <title>Heat and salt stress in the food pathogen Bacillus cereus.</title>
        <authorList>
            <person name="Browne N."/>
            <person name="Dowds B.C.A."/>
        </authorList>
    </citation>
    <scope>PROTEIN SEQUENCE OF 1-10</scope>
    <scope>INDUCTION</scope>
    <source>
        <strain>DSM 626 / NCIMB 11796 / T</strain>
    </source>
</reference>
<proteinExistence type="evidence at protein level"/>
<organism>
    <name type="scientific">Bacillus cereus</name>
    <dbReference type="NCBI Taxonomy" id="1396"/>
    <lineage>
        <taxon>Bacteria</taxon>
        <taxon>Bacillati</taxon>
        <taxon>Bacillota</taxon>
        <taxon>Bacilli</taxon>
        <taxon>Bacillales</taxon>
        <taxon>Bacillaceae</taxon>
        <taxon>Bacillus</taxon>
        <taxon>Bacillus cereus group</taxon>
    </lineage>
</organism>
<feature type="chain" id="PRO_0000271249" description="ATP-dependent 6-phosphofructokinase">
    <location>
        <begin position="1"/>
        <end position="319"/>
    </location>
</feature>
<feature type="active site" description="Proton acceptor" evidence="1">
    <location>
        <position position="127"/>
    </location>
</feature>
<feature type="binding site" evidence="1">
    <location>
        <position position="11"/>
    </location>
    <ligand>
        <name>ATP</name>
        <dbReference type="ChEBI" id="CHEBI:30616"/>
    </ligand>
</feature>
<feature type="binding site" evidence="1">
    <location>
        <begin position="21"/>
        <end position="25"/>
    </location>
    <ligand>
        <name>ADP</name>
        <dbReference type="ChEBI" id="CHEBI:456216"/>
        <note>allosteric activator; ligand shared between dimeric partners</note>
    </ligand>
</feature>
<feature type="binding site" evidence="1">
    <location>
        <begin position="72"/>
        <end position="73"/>
    </location>
    <ligand>
        <name>ATP</name>
        <dbReference type="ChEBI" id="CHEBI:30616"/>
    </ligand>
</feature>
<feature type="binding site" evidence="1">
    <location>
        <begin position="102"/>
        <end position="105"/>
    </location>
    <ligand>
        <name>ATP</name>
        <dbReference type="ChEBI" id="CHEBI:30616"/>
    </ligand>
</feature>
<feature type="binding site" evidence="1">
    <location>
        <position position="103"/>
    </location>
    <ligand>
        <name>Mg(2+)</name>
        <dbReference type="ChEBI" id="CHEBI:18420"/>
        <note>catalytic</note>
    </ligand>
</feature>
<feature type="binding site" description="in other chain" evidence="1">
    <location>
        <begin position="125"/>
        <end position="127"/>
    </location>
    <ligand>
        <name>substrate</name>
        <note>ligand shared between dimeric partners</note>
    </ligand>
</feature>
<feature type="binding site" description="in other chain" evidence="1">
    <location>
        <position position="154"/>
    </location>
    <ligand>
        <name>ADP</name>
        <dbReference type="ChEBI" id="CHEBI:456216"/>
        <note>allosteric activator; ligand shared between dimeric partners</note>
    </ligand>
</feature>
<feature type="binding site" evidence="1">
    <location>
        <position position="162"/>
    </location>
    <ligand>
        <name>substrate</name>
        <note>ligand shared between dimeric partners</note>
    </ligand>
</feature>
<feature type="binding site" description="in other chain" evidence="1">
    <location>
        <begin position="169"/>
        <end position="171"/>
    </location>
    <ligand>
        <name>substrate</name>
        <note>ligand shared between dimeric partners</note>
    </ligand>
</feature>
<feature type="binding site" description="in other chain" evidence="1">
    <location>
        <begin position="185"/>
        <end position="187"/>
    </location>
    <ligand>
        <name>ADP</name>
        <dbReference type="ChEBI" id="CHEBI:456216"/>
        <note>allosteric activator; ligand shared between dimeric partners</note>
    </ligand>
</feature>
<feature type="binding site" description="in other chain" evidence="1">
    <location>
        <position position="211"/>
    </location>
    <ligand>
        <name>ADP</name>
        <dbReference type="ChEBI" id="CHEBI:456216"/>
        <note>allosteric activator; ligand shared between dimeric partners</note>
    </ligand>
</feature>
<feature type="binding site" description="in other chain" evidence="1">
    <location>
        <begin position="213"/>
        <end position="215"/>
    </location>
    <ligand>
        <name>ADP</name>
        <dbReference type="ChEBI" id="CHEBI:456216"/>
        <note>allosteric activator; ligand shared between dimeric partners</note>
    </ligand>
</feature>
<feature type="binding site" description="in other chain" evidence="1">
    <location>
        <position position="222"/>
    </location>
    <ligand>
        <name>substrate</name>
        <note>ligand shared between dimeric partners</note>
    </ligand>
</feature>
<feature type="binding site" evidence="1">
    <location>
        <position position="243"/>
    </location>
    <ligand>
        <name>substrate</name>
        <note>ligand shared between dimeric partners</note>
    </ligand>
</feature>
<feature type="binding site" description="in other chain" evidence="1">
    <location>
        <begin position="249"/>
        <end position="252"/>
    </location>
    <ligand>
        <name>substrate</name>
        <note>ligand shared between dimeric partners</note>
    </ligand>
</feature>
<gene>
    <name evidence="1" type="primary">pfkA</name>
    <name type="synonym">pfk</name>
    <name type="ORF">BCE_G9241_4679</name>
</gene>
<keyword id="KW-0021">Allosteric enzyme</keyword>
<keyword id="KW-0067">ATP-binding</keyword>
<keyword id="KW-0963">Cytoplasm</keyword>
<keyword id="KW-0903">Direct protein sequencing</keyword>
<keyword id="KW-0324">Glycolysis</keyword>
<keyword id="KW-0418">Kinase</keyword>
<keyword id="KW-0460">Magnesium</keyword>
<keyword id="KW-0479">Metal-binding</keyword>
<keyword id="KW-0547">Nucleotide-binding</keyword>
<keyword id="KW-0346">Stress response</keyword>
<keyword id="KW-0808">Transferase</keyword>
<comment type="function">
    <text evidence="1">Catalyzes the phosphorylation of D-fructose 6-phosphate to fructose 1,6-bisphosphate by ATP, the first committing step of glycolysis.</text>
</comment>
<comment type="catalytic activity">
    <reaction evidence="1">
        <text>beta-D-fructose 6-phosphate + ATP = beta-D-fructose 1,6-bisphosphate + ADP + H(+)</text>
        <dbReference type="Rhea" id="RHEA:16109"/>
        <dbReference type="ChEBI" id="CHEBI:15378"/>
        <dbReference type="ChEBI" id="CHEBI:30616"/>
        <dbReference type="ChEBI" id="CHEBI:32966"/>
        <dbReference type="ChEBI" id="CHEBI:57634"/>
        <dbReference type="ChEBI" id="CHEBI:456216"/>
        <dbReference type="EC" id="2.7.1.11"/>
    </reaction>
</comment>
<comment type="cofactor">
    <cofactor evidence="1">
        <name>Mg(2+)</name>
        <dbReference type="ChEBI" id="CHEBI:18420"/>
    </cofactor>
</comment>
<comment type="activity regulation">
    <text evidence="1">Allosterically activated by ADP and other diphosphonucleosides, and allosterically inhibited by phosphoenolpyruvate.</text>
</comment>
<comment type="pathway">
    <text evidence="1">Carbohydrate degradation; glycolysis; D-glyceraldehyde 3-phosphate and glycerone phosphate from D-glucose: step 3/4.</text>
</comment>
<comment type="subunit">
    <text evidence="1">Homotetramer.</text>
</comment>
<comment type="subcellular location">
    <subcellularLocation>
        <location evidence="1">Cytoplasm</location>
    </subcellularLocation>
</comment>
<comment type="induction">
    <text evidence="2">By salt stress.</text>
</comment>
<comment type="similarity">
    <text evidence="1">Belongs to the phosphofructokinase type A (PFKA) family. ATP-dependent PFK group I subfamily. Prokaryotic clade 'B1' sub-subfamily.</text>
</comment>
<name>PFKA_BACCE</name>
<dbReference type="EC" id="2.7.1.11" evidence="1"/>
<dbReference type="EMBL" id="AAEK01000003">
    <property type="protein sequence ID" value="EAL16121.1"/>
    <property type="molecule type" value="Genomic_DNA"/>
</dbReference>
<dbReference type="RefSeq" id="WP_000821163.1">
    <property type="nucleotide sequence ID" value="NZ_VVXM01000007.1"/>
</dbReference>
<dbReference type="SMR" id="Q4MVY3"/>
<dbReference type="GeneID" id="93006511"/>
<dbReference type="eggNOG" id="COG0205">
    <property type="taxonomic scope" value="Bacteria"/>
</dbReference>
<dbReference type="OMA" id="GYQGMIE"/>
<dbReference type="UniPathway" id="UPA00109">
    <property type="reaction ID" value="UER00182"/>
</dbReference>
<dbReference type="GO" id="GO:0005945">
    <property type="term" value="C:6-phosphofructokinase complex"/>
    <property type="evidence" value="ECO:0007669"/>
    <property type="project" value="TreeGrafter"/>
</dbReference>
<dbReference type="GO" id="GO:0003872">
    <property type="term" value="F:6-phosphofructokinase activity"/>
    <property type="evidence" value="ECO:0007669"/>
    <property type="project" value="UniProtKB-UniRule"/>
</dbReference>
<dbReference type="GO" id="GO:0016208">
    <property type="term" value="F:AMP binding"/>
    <property type="evidence" value="ECO:0007669"/>
    <property type="project" value="TreeGrafter"/>
</dbReference>
<dbReference type="GO" id="GO:0005524">
    <property type="term" value="F:ATP binding"/>
    <property type="evidence" value="ECO:0007669"/>
    <property type="project" value="UniProtKB-KW"/>
</dbReference>
<dbReference type="GO" id="GO:0070095">
    <property type="term" value="F:fructose-6-phosphate binding"/>
    <property type="evidence" value="ECO:0007669"/>
    <property type="project" value="TreeGrafter"/>
</dbReference>
<dbReference type="GO" id="GO:0042802">
    <property type="term" value="F:identical protein binding"/>
    <property type="evidence" value="ECO:0007669"/>
    <property type="project" value="TreeGrafter"/>
</dbReference>
<dbReference type="GO" id="GO:0046872">
    <property type="term" value="F:metal ion binding"/>
    <property type="evidence" value="ECO:0007669"/>
    <property type="project" value="UniProtKB-KW"/>
</dbReference>
<dbReference type="GO" id="GO:0048029">
    <property type="term" value="F:monosaccharide binding"/>
    <property type="evidence" value="ECO:0007669"/>
    <property type="project" value="TreeGrafter"/>
</dbReference>
<dbReference type="GO" id="GO:0061621">
    <property type="term" value="P:canonical glycolysis"/>
    <property type="evidence" value="ECO:0007669"/>
    <property type="project" value="TreeGrafter"/>
</dbReference>
<dbReference type="GO" id="GO:0030388">
    <property type="term" value="P:fructose 1,6-bisphosphate metabolic process"/>
    <property type="evidence" value="ECO:0007669"/>
    <property type="project" value="TreeGrafter"/>
</dbReference>
<dbReference type="GO" id="GO:0006002">
    <property type="term" value="P:fructose 6-phosphate metabolic process"/>
    <property type="evidence" value="ECO:0007669"/>
    <property type="project" value="InterPro"/>
</dbReference>
<dbReference type="CDD" id="cd00763">
    <property type="entry name" value="Bacterial_PFK"/>
    <property type="match status" value="1"/>
</dbReference>
<dbReference type="FunFam" id="3.40.50.450:FF:000001">
    <property type="entry name" value="ATP-dependent 6-phosphofructokinase"/>
    <property type="match status" value="1"/>
</dbReference>
<dbReference type="FunFam" id="3.40.50.460:FF:000002">
    <property type="entry name" value="ATP-dependent 6-phosphofructokinase"/>
    <property type="match status" value="1"/>
</dbReference>
<dbReference type="Gene3D" id="3.40.50.450">
    <property type="match status" value="1"/>
</dbReference>
<dbReference type="Gene3D" id="3.40.50.460">
    <property type="entry name" value="Phosphofructokinase domain"/>
    <property type="match status" value="1"/>
</dbReference>
<dbReference type="HAMAP" id="MF_00339">
    <property type="entry name" value="Phosphofructokinase_I_B1"/>
    <property type="match status" value="1"/>
</dbReference>
<dbReference type="InterPro" id="IPR022953">
    <property type="entry name" value="ATP_PFK"/>
</dbReference>
<dbReference type="InterPro" id="IPR012003">
    <property type="entry name" value="ATP_PFK_prok-type"/>
</dbReference>
<dbReference type="InterPro" id="IPR012828">
    <property type="entry name" value="PFKA_ATP_prok"/>
</dbReference>
<dbReference type="InterPro" id="IPR015912">
    <property type="entry name" value="Phosphofructokinase_CS"/>
</dbReference>
<dbReference type="InterPro" id="IPR000023">
    <property type="entry name" value="Phosphofructokinase_dom"/>
</dbReference>
<dbReference type="InterPro" id="IPR035966">
    <property type="entry name" value="PKF_sf"/>
</dbReference>
<dbReference type="NCBIfam" id="TIGR02482">
    <property type="entry name" value="PFKA_ATP"/>
    <property type="match status" value="1"/>
</dbReference>
<dbReference type="NCBIfam" id="NF002872">
    <property type="entry name" value="PRK03202.1"/>
    <property type="match status" value="1"/>
</dbReference>
<dbReference type="PANTHER" id="PTHR13697:SF4">
    <property type="entry name" value="ATP-DEPENDENT 6-PHOSPHOFRUCTOKINASE"/>
    <property type="match status" value="1"/>
</dbReference>
<dbReference type="PANTHER" id="PTHR13697">
    <property type="entry name" value="PHOSPHOFRUCTOKINASE"/>
    <property type="match status" value="1"/>
</dbReference>
<dbReference type="Pfam" id="PF00365">
    <property type="entry name" value="PFK"/>
    <property type="match status" value="1"/>
</dbReference>
<dbReference type="PIRSF" id="PIRSF000532">
    <property type="entry name" value="ATP_PFK_prok"/>
    <property type="match status" value="1"/>
</dbReference>
<dbReference type="PRINTS" id="PR00476">
    <property type="entry name" value="PHFRCTKINASE"/>
</dbReference>
<dbReference type="SUPFAM" id="SSF53784">
    <property type="entry name" value="Phosphofructokinase"/>
    <property type="match status" value="1"/>
</dbReference>
<dbReference type="PROSITE" id="PS00433">
    <property type="entry name" value="PHOSPHOFRUCTOKINASE"/>
    <property type="match status" value="1"/>
</dbReference>
<protein>
    <recommendedName>
        <fullName evidence="1">ATP-dependent 6-phosphofructokinase</fullName>
        <shortName evidence="1">ATP-PFK</shortName>
        <shortName evidence="1">Phosphofructokinase</shortName>
        <ecNumber evidence="1">2.7.1.11</ecNumber>
    </recommendedName>
    <alternativeName>
        <fullName evidence="1">Phosphohexokinase</fullName>
    </alternativeName>
</protein>
<sequence length="319" mass="34308">MKRIGVLTSGGDSPGMNAAIRAVVRKAIFHDIEVYGIYHGYAGLISGHIEKLELGSVGDIIHRGGTKLYTARCPEFKDPEVRLKGIEQLKKHGIEGLVVIGGDGSYQGAKKLTEQGFPCVGVPGTIDNDIPGTDFTIGFDTALNTVIDAIDKIRDTATSHERTYVIEVMGRHAGDIALWAGLADGAETILIPEEEYDMEDVIARLKRGSERGKKHSIIVVAEGVGSAIDIGKHIEEATNFDTRVTVLGHVQRGGSPSAQDRVLASRLGARAVELLIAGKGGRCVGIQDNKLVDHDIIEALAQKHTIDKDMYQLSKELSI</sequence>
<evidence type="ECO:0000255" key="1">
    <source>
        <dbReference type="HAMAP-Rule" id="MF_00339"/>
    </source>
</evidence>
<evidence type="ECO:0000269" key="2">
    <source>
    </source>
</evidence>
<accession>Q4MVY3</accession>
<accession>P83066</accession>